<accession>P36299</accession>
<dbReference type="EMBL" id="D13096">
    <property type="protein sequence ID" value="BAA02413.1"/>
    <property type="molecule type" value="Genomic_RNA"/>
</dbReference>
<dbReference type="PIR" id="JQ1724">
    <property type="entry name" value="JQ1724"/>
</dbReference>
<dbReference type="SMR" id="P36299"/>
<dbReference type="GO" id="GO:0044178">
    <property type="term" value="C:host cell Golgi membrane"/>
    <property type="evidence" value="ECO:0007669"/>
    <property type="project" value="UniProtKB-SubCell"/>
</dbReference>
<dbReference type="GO" id="GO:0016020">
    <property type="term" value="C:membrane"/>
    <property type="evidence" value="ECO:0007669"/>
    <property type="project" value="UniProtKB-UniRule"/>
</dbReference>
<dbReference type="GO" id="GO:0019031">
    <property type="term" value="C:viral envelope"/>
    <property type="evidence" value="ECO:0007669"/>
    <property type="project" value="UniProtKB-UniRule"/>
</dbReference>
<dbReference type="GO" id="GO:0055036">
    <property type="term" value="C:virion membrane"/>
    <property type="evidence" value="ECO:0007669"/>
    <property type="project" value="UniProtKB-SubCell"/>
</dbReference>
<dbReference type="GO" id="GO:0039660">
    <property type="term" value="F:structural constituent of virion"/>
    <property type="evidence" value="ECO:0007669"/>
    <property type="project" value="UniProtKB-UniRule"/>
</dbReference>
<dbReference type="CDD" id="cd21564">
    <property type="entry name" value="alphaCoV_M"/>
    <property type="match status" value="1"/>
</dbReference>
<dbReference type="HAMAP" id="MF_04201">
    <property type="entry name" value="ALPHA_CORONA_M"/>
    <property type="match status" value="1"/>
</dbReference>
<dbReference type="InterPro" id="IPR042551">
    <property type="entry name" value="ALPHA_CORONA_M"/>
</dbReference>
<dbReference type="InterPro" id="IPR002574">
    <property type="entry name" value="M_CoV"/>
</dbReference>
<dbReference type="Pfam" id="PF01635">
    <property type="entry name" value="CoV_M"/>
    <property type="match status" value="1"/>
</dbReference>
<dbReference type="PROSITE" id="PS51927">
    <property type="entry name" value="COV_M"/>
    <property type="match status" value="1"/>
</dbReference>
<comment type="function">
    <text evidence="1 2">Component of the viral envelope that plays a central role in virus morphogenesis and assembly via its interactions with other viral proteins.</text>
</comment>
<comment type="subunit">
    <text evidence="1 2">Homomultimer. Interacts with envelope E protein in the budding compartment of the host cell, which is located between endoplasmic reticulum and the Golgi complex. Forms a complex with HE and S proteins. Interacts with nucleocapsid N protein. This interaction probably participates in RNA packaging into the virus.</text>
</comment>
<comment type="subcellular location">
    <subcellularLocation>
        <location evidence="1">Virion membrane</location>
        <topology evidence="1">Multi-pass membrane protein</topology>
    </subcellularLocation>
    <subcellularLocation>
        <location evidence="1">Host Golgi apparatus membrane</location>
        <topology evidence="1">Multi-pass membrane protein</topology>
    </subcellularLocation>
    <text evidence="1">Largely embedded in the lipid bilayer.</text>
</comment>
<comment type="similarity">
    <text evidence="1">Belongs to the alphacoronaviruses M protein family.</text>
</comment>
<organismHost>
    <name type="scientific">Canis lupus familiaris</name>
    <name type="common">Dog</name>
    <name type="synonym">Canis familiaris</name>
    <dbReference type="NCBI Taxonomy" id="9615"/>
</organismHost>
<feature type="chain" id="PRO_0000037153" description="Membrane protein">
    <location>
        <begin position="1"/>
        <end position="262"/>
    </location>
</feature>
<feature type="topological domain" description="Virion surface" evidence="1">
    <location>
        <begin position="19"/>
        <end position="47"/>
    </location>
</feature>
<feature type="transmembrane region" description="Helical" evidence="1">
    <location>
        <begin position="48"/>
        <end position="68"/>
    </location>
</feature>
<feature type="topological domain" description="Intravirion" evidence="1">
    <location>
        <begin position="69"/>
        <end position="77"/>
    </location>
</feature>
<feature type="transmembrane region" description="Helical" evidence="1">
    <location>
        <begin position="78"/>
        <end position="98"/>
    </location>
</feature>
<feature type="topological domain" description="Virion surface" evidence="1">
    <location>
        <begin position="99"/>
        <end position="112"/>
    </location>
</feature>
<feature type="transmembrane region" description="Helical" evidence="1">
    <location>
        <begin position="113"/>
        <end position="133"/>
    </location>
</feature>
<feature type="topological domain" description="Intravirion" evidence="1">
    <location>
        <begin position="134"/>
        <end position="262"/>
    </location>
</feature>
<feature type="region of interest" description="Interaction with N protein" evidence="1">
    <location>
        <begin position="237"/>
        <end position="252"/>
    </location>
</feature>
<name>VME1_CVCAI</name>
<sequence>MKKILFLLACAIACVYGERYCAMTESSTSCRNSTAGNCASCFETGDLIWHLANWNFSWSVILIIFITVLQYGRPQFSWFVCGIKMLIMWLLWPIVLALTIFNAYLEYRVSRYVMFGFSVAGATVTFILWIMYFVRSIQLYRRTKSWWSFNPETSAILCVSALGRSYVLPLEGVPTGVTLTLLSGNLCAEGFKIAGGMNIDNLPKYVMVALPVRTIVYTLVGKKLKASSATGWAYYVKSKAGDYSTDARTDNLSEHEKLLHMV</sequence>
<keyword id="KW-0325">Glycoprotein</keyword>
<keyword id="KW-1040">Host Golgi apparatus</keyword>
<keyword id="KW-1043">Host membrane</keyword>
<keyword id="KW-0472">Membrane</keyword>
<keyword id="KW-0812">Transmembrane</keyword>
<keyword id="KW-1133">Transmembrane helix</keyword>
<keyword id="KW-0261">Viral envelope protein</keyword>
<keyword id="KW-0468">Viral matrix protein</keyword>
<keyword id="KW-0946">Virion</keyword>
<evidence type="ECO:0000255" key="1">
    <source>
        <dbReference type="HAMAP-Rule" id="MF_04201"/>
    </source>
</evidence>
<evidence type="ECO:0000255" key="2">
    <source>
        <dbReference type="PROSITE-ProRule" id="PRU01275"/>
    </source>
</evidence>
<proteinExistence type="inferred from homology"/>
<reference key="1">
    <citation type="journal article" date="1992" name="J. Gen. Virol.">
        <title>Analysis of a 9.6 kb sequence from the 3' end of canine coronavirus genomic RNA.</title>
        <authorList>
            <person name="Horsburgh B.C."/>
            <person name="Brierley I."/>
            <person name="Brown T.D.K."/>
        </authorList>
    </citation>
    <scope>NUCLEOTIDE SEQUENCE [GENOMIC RNA]</scope>
</reference>
<organism>
    <name type="scientific">Canine coronavirus (strain Insavc-1)</name>
    <name type="common">CCoV</name>
    <name type="synonym">Canine enteric coronavirus</name>
    <dbReference type="NCBI Taxonomy" id="36391"/>
    <lineage>
        <taxon>Viruses</taxon>
        <taxon>Riboviria</taxon>
        <taxon>Orthornavirae</taxon>
        <taxon>Pisuviricota</taxon>
        <taxon>Pisoniviricetes</taxon>
        <taxon>Nidovirales</taxon>
        <taxon>Cornidovirineae</taxon>
        <taxon>Coronaviridae</taxon>
        <taxon>Orthocoronavirinae</taxon>
        <taxon>Alphacoronavirus</taxon>
        <taxon>Tegacovirus</taxon>
        <taxon>Alphacoronavirus 1</taxon>
    </lineage>
</organism>
<gene>
    <name evidence="1" type="primary">M</name>
</gene>
<protein>
    <recommendedName>
        <fullName evidence="1">Membrane protein</fullName>
        <shortName evidence="1">M protein</shortName>
    </recommendedName>
    <alternativeName>
        <fullName evidence="1">E1 glycoprotein</fullName>
    </alternativeName>
    <alternativeName>
        <fullName evidence="1">Matrix glycoprotein</fullName>
    </alternativeName>
    <alternativeName>
        <fullName evidence="1">Membrane glycoprotein</fullName>
    </alternativeName>
</protein>